<gene>
    <name evidence="1" type="primary">aroA</name>
    <name type="ordered locus">EcE24377A_1005</name>
</gene>
<feature type="chain" id="PRO_1000058597" description="3-phosphoshikimate 1-carboxyvinyltransferase">
    <location>
        <begin position="1"/>
        <end position="427"/>
    </location>
</feature>
<feature type="active site" description="Proton acceptor" evidence="1">
    <location>
        <position position="313"/>
    </location>
</feature>
<feature type="binding site" evidence="1">
    <location>
        <position position="22"/>
    </location>
    <ligand>
        <name>3-phosphoshikimate</name>
        <dbReference type="ChEBI" id="CHEBI:145989"/>
    </ligand>
</feature>
<feature type="binding site" evidence="1">
    <location>
        <position position="22"/>
    </location>
    <ligand>
        <name>phosphoenolpyruvate</name>
        <dbReference type="ChEBI" id="CHEBI:58702"/>
    </ligand>
</feature>
<feature type="binding site" evidence="1">
    <location>
        <position position="23"/>
    </location>
    <ligand>
        <name>3-phosphoshikimate</name>
        <dbReference type="ChEBI" id="CHEBI:145989"/>
    </ligand>
</feature>
<feature type="binding site" evidence="1">
    <location>
        <position position="27"/>
    </location>
    <ligand>
        <name>3-phosphoshikimate</name>
        <dbReference type="ChEBI" id="CHEBI:145989"/>
    </ligand>
</feature>
<feature type="binding site" evidence="1">
    <location>
        <position position="96"/>
    </location>
    <ligand>
        <name>phosphoenolpyruvate</name>
        <dbReference type="ChEBI" id="CHEBI:58702"/>
    </ligand>
</feature>
<feature type="binding site" evidence="1">
    <location>
        <position position="124"/>
    </location>
    <ligand>
        <name>phosphoenolpyruvate</name>
        <dbReference type="ChEBI" id="CHEBI:58702"/>
    </ligand>
</feature>
<feature type="binding site" evidence="1">
    <location>
        <position position="169"/>
    </location>
    <ligand>
        <name>3-phosphoshikimate</name>
        <dbReference type="ChEBI" id="CHEBI:145989"/>
    </ligand>
</feature>
<feature type="binding site" evidence="1">
    <location>
        <position position="170"/>
    </location>
    <ligand>
        <name>3-phosphoshikimate</name>
        <dbReference type="ChEBI" id="CHEBI:145989"/>
    </ligand>
</feature>
<feature type="binding site" evidence="1">
    <location>
        <position position="171"/>
    </location>
    <ligand>
        <name>3-phosphoshikimate</name>
        <dbReference type="ChEBI" id="CHEBI:145989"/>
    </ligand>
</feature>
<feature type="binding site" evidence="1">
    <location>
        <position position="171"/>
    </location>
    <ligand>
        <name>phosphoenolpyruvate</name>
        <dbReference type="ChEBI" id="CHEBI:58702"/>
    </ligand>
</feature>
<feature type="binding site" evidence="1">
    <location>
        <position position="197"/>
    </location>
    <ligand>
        <name>3-phosphoshikimate</name>
        <dbReference type="ChEBI" id="CHEBI:145989"/>
    </ligand>
</feature>
<feature type="binding site" evidence="1">
    <location>
        <position position="313"/>
    </location>
    <ligand>
        <name>3-phosphoshikimate</name>
        <dbReference type="ChEBI" id="CHEBI:145989"/>
    </ligand>
</feature>
<feature type="binding site" evidence="1">
    <location>
        <position position="336"/>
    </location>
    <ligand>
        <name>3-phosphoshikimate</name>
        <dbReference type="ChEBI" id="CHEBI:145989"/>
    </ligand>
</feature>
<feature type="binding site" evidence="1">
    <location>
        <position position="340"/>
    </location>
    <ligand>
        <name>3-phosphoshikimate</name>
        <dbReference type="ChEBI" id="CHEBI:145989"/>
    </ligand>
</feature>
<feature type="binding site" evidence="1">
    <location>
        <position position="344"/>
    </location>
    <ligand>
        <name>phosphoenolpyruvate</name>
        <dbReference type="ChEBI" id="CHEBI:58702"/>
    </ligand>
</feature>
<feature type="binding site" evidence="1">
    <location>
        <position position="386"/>
    </location>
    <ligand>
        <name>phosphoenolpyruvate</name>
        <dbReference type="ChEBI" id="CHEBI:58702"/>
    </ligand>
</feature>
<feature type="binding site" evidence="1">
    <location>
        <position position="411"/>
    </location>
    <ligand>
        <name>phosphoenolpyruvate</name>
        <dbReference type="ChEBI" id="CHEBI:58702"/>
    </ligand>
</feature>
<sequence>MESLTLQPIARVDGTINLPGSKSVSNRALLLAALAHGKTVLTNLLDSDDVRHMLNALTALGVSYTLSADRTRCEIIGNGGPLHAEGALELFLGNAGTAMRPLAAALCLGSNDIVLTGEPRMKERPIGHLVDALRLGGAKITYLEQENYPPLRLQGGFTGGNVDVDGSVSSQFLTALLMTAPLAPEDTVIRIKGDLVSKPYIDITLNLMKTFGVEIENQHYQQFVVKGGQSYQSPGTYLVEGDASSASYFLAAAAIKGGTVKVTGIGRNSMQGDIRFADVLEKMGATICWGDDYISCTRGELNAIDMDMNHIPDAAMTIATAALFAKGTTTLRNIYNWRVKETDRLFAMATELRKVGAEVEEGHDYIRITPPEKLNFAEIATYNDHRMAMCFSLVALSDTPVTILDPKCTAKTFPDYFEQLARISQAA</sequence>
<dbReference type="EC" id="2.5.1.19" evidence="1"/>
<dbReference type="EMBL" id="CP000800">
    <property type="protein sequence ID" value="ABV17446.1"/>
    <property type="molecule type" value="Genomic_DNA"/>
</dbReference>
<dbReference type="RefSeq" id="WP_000445231.1">
    <property type="nucleotide sequence ID" value="NC_009801.1"/>
</dbReference>
<dbReference type="BMRB" id="A7ZJZ7"/>
<dbReference type="SMR" id="A7ZJZ7"/>
<dbReference type="GeneID" id="93776510"/>
<dbReference type="KEGG" id="ecw:EcE24377A_1005"/>
<dbReference type="HOGENOM" id="CLU_024321_0_0_6"/>
<dbReference type="UniPathway" id="UPA00053">
    <property type="reaction ID" value="UER00089"/>
</dbReference>
<dbReference type="Proteomes" id="UP000001122">
    <property type="component" value="Chromosome"/>
</dbReference>
<dbReference type="GO" id="GO:0005737">
    <property type="term" value="C:cytoplasm"/>
    <property type="evidence" value="ECO:0007669"/>
    <property type="project" value="UniProtKB-SubCell"/>
</dbReference>
<dbReference type="GO" id="GO:0003866">
    <property type="term" value="F:3-phosphoshikimate 1-carboxyvinyltransferase activity"/>
    <property type="evidence" value="ECO:0007669"/>
    <property type="project" value="UniProtKB-UniRule"/>
</dbReference>
<dbReference type="GO" id="GO:0008652">
    <property type="term" value="P:amino acid biosynthetic process"/>
    <property type="evidence" value="ECO:0007669"/>
    <property type="project" value="UniProtKB-KW"/>
</dbReference>
<dbReference type="GO" id="GO:0009073">
    <property type="term" value="P:aromatic amino acid family biosynthetic process"/>
    <property type="evidence" value="ECO:0007669"/>
    <property type="project" value="UniProtKB-KW"/>
</dbReference>
<dbReference type="GO" id="GO:0009423">
    <property type="term" value="P:chorismate biosynthetic process"/>
    <property type="evidence" value="ECO:0007669"/>
    <property type="project" value="UniProtKB-UniRule"/>
</dbReference>
<dbReference type="CDD" id="cd01554">
    <property type="entry name" value="EPT-like"/>
    <property type="match status" value="1"/>
</dbReference>
<dbReference type="FunFam" id="3.65.10.10:FF:000003">
    <property type="entry name" value="3-phosphoshikimate 1-carboxyvinyltransferase"/>
    <property type="match status" value="1"/>
</dbReference>
<dbReference type="FunFam" id="3.65.10.10:FF:000004">
    <property type="entry name" value="3-phosphoshikimate 1-carboxyvinyltransferase"/>
    <property type="match status" value="1"/>
</dbReference>
<dbReference type="Gene3D" id="3.65.10.10">
    <property type="entry name" value="Enolpyruvate transferase domain"/>
    <property type="match status" value="2"/>
</dbReference>
<dbReference type="HAMAP" id="MF_00210">
    <property type="entry name" value="EPSP_synth"/>
    <property type="match status" value="1"/>
</dbReference>
<dbReference type="InterPro" id="IPR001986">
    <property type="entry name" value="Enolpyruvate_Tfrase_dom"/>
</dbReference>
<dbReference type="InterPro" id="IPR036968">
    <property type="entry name" value="Enolpyruvate_Tfrase_sf"/>
</dbReference>
<dbReference type="InterPro" id="IPR006264">
    <property type="entry name" value="EPSP_synthase"/>
</dbReference>
<dbReference type="InterPro" id="IPR023193">
    <property type="entry name" value="EPSP_synthase_CS"/>
</dbReference>
<dbReference type="InterPro" id="IPR013792">
    <property type="entry name" value="RNA3'P_cycl/enolpyr_Trfase_a/b"/>
</dbReference>
<dbReference type="NCBIfam" id="TIGR01356">
    <property type="entry name" value="aroA"/>
    <property type="match status" value="1"/>
</dbReference>
<dbReference type="PANTHER" id="PTHR21090">
    <property type="entry name" value="AROM/DEHYDROQUINATE SYNTHASE"/>
    <property type="match status" value="1"/>
</dbReference>
<dbReference type="PANTHER" id="PTHR21090:SF5">
    <property type="entry name" value="PENTAFUNCTIONAL AROM POLYPEPTIDE"/>
    <property type="match status" value="1"/>
</dbReference>
<dbReference type="Pfam" id="PF00275">
    <property type="entry name" value="EPSP_synthase"/>
    <property type="match status" value="1"/>
</dbReference>
<dbReference type="PIRSF" id="PIRSF000505">
    <property type="entry name" value="EPSPS"/>
    <property type="match status" value="1"/>
</dbReference>
<dbReference type="SUPFAM" id="SSF55205">
    <property type="entry name" value="EPT/RTPC-like"/>
    <property type="match status" value="1"/>
</dbReference>
<dbReference type="PROSITE" id="PS00104">
    <property type="entry name" value="EPSP_SYNTHASE_1"/>
    <property type="match status" value="1"/>
</dbReference>
<dbReference type="PROSITE" id="PS00885">
    <property type="entry name" value="EPSP_SYNTHASE_2"/>
    <property type="match status" value="1"/>
</dbReference>
<comment type="function">
    <text evidence="1">Catalyzes the transfer of the enolpyruvyl moiety of phosphoenolpyruvate (PEP) to the 5-hydroxyl of shikimate-3-phosphate (S3P) to produce enolpyruvyl shikimate-3-phosphate and inorganic phosphate.</text>
</comment>
<comment type="catalytic activity">
    <reaction evidence="1">
        <text>3-phosphoshikimate + phosphoenolpyruvate = 5-O-(1-carboxyvinyl)-3-phosphoshikimate + phosphate</text>
        <dbReference type="Rhea" id="RHEA:21256"/>
        <dbReference type="ChEBI" id="CHEBI:43474"/>
        <dbReference type="ChEBI" id="CHEBI:57701"/>
        <dbReference type="ChEBI" id="CHEBI:58702"/>
        <dbReference type="ChEBI" id="CHEBI:145989"/>
        <dbReference type="EC" id="2.5.1.19"/>
    </reaction>
    <physiologicalReaction direction="left-to-right" evidence="1">
        <dbReference type="Rhea" id="RHEA:21257"/>
    </physiologicalReaction>
</comment>
<comment type="pathway">
    <text evidence="1">Metabolic intermediate biosynthesis; chorismate biosynthesis; chorismate from D-erythrose 4-phosphate and phosphoenolpyruvate: step 6/7.</text>
</comment>
<comment type="subunit">
    <text evidence="1">Monomer.</text>
</comment>
<comment type="subcellular location">
    <subcellularLocation>
        <location evidence="1">Cytoplasm</location>
    </subcellularLocation>
</comment>
<comment type="similarity">
    <text evidence="1">Belongs to the EPSP synthase family.</text>
</comment>
<keyword id="KW-0028">Amino-acid biosynthesis</keyword>
<keyword id="KW-0057">Aromatic amino acid biosynthesis</keyword>
<keyword id="KW-0963">Cytoplasm</keyword>
<keyword id="KW-1185">Reference proteome</keyword>
<keyword id="KW-0808">Transferase</keyword>
<organism>
    <name type="scientific">Escherichia coli O139:H28 (strain E24377A / ETEC)</name>
    <dbReference type="NCBI Taxonomy" id="331111"/>
    <lineage>
        <taxon>Bacteria</taxon>
        <taxon>Pseudomonadati</taxon>
        <taxon>Pseudomonadota</taxon>
        <taxon>Gammaproteobacteria</taxon>
        <taxon>Enterobacterales</taxon>
        <taxon>Enterobacteriaceae</taxon>
        <taxon>Escherichia</taxon>
    </lineage>
</organism>
<evidence type="ECO:0000255" key="1">
    <source>
        <dbReference type="HAMAP-Rule" id="MF_00210"/>
    </source>
</evidence>
<reference key="1">
    <citation type="journal article" date="2008" name="J. Bacteriol.">
        <title>The pangenome structure of Escherichia coli: comparative genomic analysis of E. coli commensal and pathogenic isolates.</title>
        <authorList>
            <person name="Rasko D.A."/>
            <person name="Rosovitz M.J."/>
            <person name="Myers G.S.A."/>
            <person name="Mongodin E.F."/>
            <person name="Fricke W.F."/>
            <person name="Gajer P."/>
            <person name="Crabtree J."/>
            <person name="Sebaihia M."/>
            <person name="Thomson N.R."/>
            <person name="Chaudhuri R."/>
            <person name="Henderson I.R."/>
            <person name="Sperandio V."/>
            <person name="Ravel J."/>
        </authorList>
    </citation>
    <scope>NUCLEOTIDE SEQUENCE [LARGE SCALE GENOMIC DNA]</scope>
    <source>
        <strain>E24377A / ETEC</strain>
    </source>
</reference>
<proteinExistence type="inferred from homology"/>
<name>AROA_ECO24</name>
<protein>
    <recommendedName>
        <fullName evidence="1">3-phosphoshikimate 1-carboxyvinyltransferase</fullName>
        <ecNumber evidence="1">2.5.1.19</ecNumber>
    </recommendedName>
    <alternativeName>
        <fullName evidence="1">5-enolpyruvylshikimate-3-phosphate synthase</fullName>
        <shortName evidence="1">EPSP synthase</shortName>
        <shortName evidence="1">EPSPS</shortName>
    </alternativeName>
</protein>
<accession>A7ZJZ7</accession>